<comment type="catalytic activity">
    <reaction evidence="1">
        <text>an acyl phosphate + H2O = a carboxylate + phosphate + H(+)</text>
        <dbReference type="Rhea" id="RHEA:14965"/>
        <dbReference type="ChEBI" id="CHEBI:15377"/>
        <dbReference type="ChEBI" id="CHEBI:15378"/>
        <dbReference type="ChEBI" id="CHEBI:29067"/>
        <dbReference type="ChEBI" id="CHEBI:43474"/>
        <dbReference type="ChEBI" id="CHEBI:59918"/>
        <dbReference type="EC" id="3.6.1.7"/>
    </reaction>
</comment>
<comment type="similarity">
    <text evidence="1">Belongs to the acylphosphatase family.</text>
</comment>
<comment type="sequence caution" evidence="2">
    <conflict type="erroneous initiation">
        <sequence resource="EMBL-CDS" id="AAN79574"/>
    </conflict>
</comment>
<keyword id="KW-1015">Disulfide bond</keyword>
<keyword id="KW-0378">Hydrolase</keyword>
<keyword id="KW-1185">Reference proteome</keyword>
<feature type="chain" id="PRO_0000326709" description="Acylphosphatase">
    <location>
        <begin position="1"/>
        <end position="92"/>
    </location>
</feature>
<feature type="domain" description="Acylphosphatase-like" evidence="1">
    <location>
        <begin position="5"/>
        <end position="92"/>
    </location>
</feature>
<feature type="active site" evidence="1">
    <location>
        <position position="20"/>
    </location>
</feature>
<feature type="active site" evidence="1">
    <location>
        <position position="38"/>
    </location>
</feature>
<feature type="disulfide bond" evidence="1">
    <location>
        <begin position="5"/>
        <end position="49"/>
    </location>
</feature>
<dbReference type="EC" id="3.6.1.7" evidence="1"/>
<dbReference type="EMBL" id="AE014075">
    <property type="protein sequence ID" value="AAN79574.1"/>
    <property type="status" value="ALT_INIT"/>
    <property type="molecule type" value="Genomic_DNA"/>
</dbReference>
<dbReference type="RefSeq" id="WP_000048231.1">
    <property type="nucleotide sequence ID" value="NZ_CP051263.1"/>
</dbReference>
<dbReference type="BMRB" id="Q8FJ70"/>
<dbReference type="SMR" id="Q8FJ70"/>
<dbReference type="STRING" id="199310.c1106"/>
<dbReference type="KEGG" id="ecc:c1106"/>
<dbReference type="eggNOG" id="COG1254">
    <property type="taxonomic scope" value="Bacteria"/>
</dbReference>
<dbReference type="HOGENOM" id="CLU_1624530_0_0_6"/>
<dbReference type="Proteomes" id="UP000001410">
    <property type="component" value="Chromosome"/>
</dbReference>
<dbReference type="GO" id="GO:0003998">
    <property type="term" value="F:acylphosphatase activity"/>
    <property type="evidence" value="ECO:0007669"/>
    <property type="project" value="UniProtKB-UniRule"/>
</dbReference>
<dbReference type="FunFam" id="3.30.70.100:FF:000012">
    <property type="entry name" value="Acylphosphatase"/>
    <property type="match status" value="1"/>
</dbReference>
<dbReference type="Gene3D" id="3.30.70.100">
    <property type="match status" value="1"/>
</dbReference>
<dbReference type="HAMAP" id="MF_01450">
    <property type="entry name" value="Acylphosphatase_entero"/>
    <property type="match status" value="1"/>
</dbReference>
<dbReference type="InterPro" id="IPR020456">
    <property type="entry name" value="Acylphosphatase"/>
</dbReference>
<dbReference type="InterPro" id="IPR001792">
    <property type="entry name" value="Acylphosphatase-like_dom"/>
</dbReference>
<dbReference type="InterPro" id="IPR036046">
    <property type="entry name" value="Acylphosphatase-like_dom_sf"/>
</dbReference>
<dbReference type="InterPro" id="IPR028627">
    <property type="entry name" value="Acylphosphatase_bac"/>
</dbReference>
<dbReference type="InterPro" id="IPR017968">
    <property type="entry name" value="Acylphosphatase_CS"/>
</dbReference>
<dbReference type="NCBIfam" id="NF011000">
    <property type="entry name" value="PRK14426.1"/>
    <property type="match status" value="1"/>
</dbReference>
<dbReference type="PANTHER" id="PTHR47268">
    <property type="entry name" value="ACYLPHOSPHATASE"/>
    <property type="match status" value="1"/>
</dbReference>
<dbReference type="PANTHER" id="PTHR47268:SF4">
    <property type="entry name" value="ACYLPHOSPHATASE"/>
    <property type="match status" value="1"/>
</dbReference>
<dbReference type="Pfam" id="PF00708">
    <property type="entry name" value="Acylphosphatase"/>
    <property type="match status" value="1"/>
</dbReference>
<dbReference type="PRINTS" id="PR00112">
    <property type="entry name" value="ACYLPHPHTASE"/>
</dbReference>
<dbReference type="SUPFAM" id="SSF54975">
    <property type="entry name" value="Acylphosphatase/BLUF domain-like"/>
    <property type="match status" value="1"/>
</dbReference>
<dbReference type="PROSITE" id="PS00150">
    <property type="entry name" value="ACYLPHOSPHATASE_1"/>
    <property type="match status" value="1"/>
</dbReference>
<dbReference type="PROSITE" id="PS00151">
    <property type="entry name" value="ACYLPHOSPHATASE_2"/>
    <property type="match status" value="1"/>
</dbReference>
<dbReference type="PROSITE" id="PS51160">
    <property type="entry name" value="ACYLPHOSPHATASE_3"/>
    <property type="match status" value="1"/>
</dbReference>
<organism>
    <name type="scientific">Escherichia coli O6:H1 (strain CFT073 / ATCC 700928 / UPEC)</name>
    <dbReference type="NCBI Taxonomy" id="199310"/>
    <lineage>
        <taxon>Bacteria</taxon>
        <taxon>Pseudomonadati</taxon>
        <taxon>Pseudomonadota</taxon>
        <taxon>Gammaproteobacteria</taxon>
        <taxon>Enterobacterales</taxon>
        <taxon>Enterobacteriaceae</taxon>
        <taxon>Escherichia</taxon>
    </lineage>
</organism>
<gene>
    <name evidence="1" type="primary">yccX</name>
    <name type="ordered locus">c1106</name>
</gene>
<protein>
    <recommendedName>
        <fullName evidence="1">Acylphosphatase</fullName>
        <ecNumber evidence="1">3.6.1.7</ecNumber>
    </recommendedName>
    <alternativeName>
        <fullName evidence="1">Acylphosphate phosphohydrolase</fullName>
    </alternativeName>
</protein>
<evidence type="ECO:0000255" key="1">
    <source>
        <dbReference type="HAMAP-Rule" id="MF_01450"/>
    </source>
</evidence>
<evidence type="ECO:0000305" key="2"/>
<proteinExistence type="inferred from homology"/>
<sequence>MSKVCIIAWVYGRVQGVGFRYTTQYEAKKLGLTGYAKNLDDGSVEVVACGDEGQVEKLMQWLKSGGPRSARVERVLSEPHHPSGELTDFRIR</sequence>
<accession>Q8FJ70</accession>
<name>ACYP_ECOL6</name>
<reference key="1">
    <citation type="journal article" date="2002" name="Proc. Natl. Acad. Sci. U.S.A.">
        <title>Extensive mosaic structure revealed by the complete genome sequence of uropathogenic Escherichia coli.</title>
        <authorList>
            <person name="Welch R.A."/>
            <person name="Burland V."/>
            <person name="Plunkett G. III"/>
            <person name="Redford P."/>
            <person name="Roesch P."/>
            <person name="Rasko D."/>
            <person name="Buckles E.L."/>
            <person name="Liou S.-R."/>
            <person name="Boutin A."/>
            <person name="Hackett J."/>
            <person name="Stroud D."/>
            <person name="Mayhew G.F."/>
            <person name="Rose D.J."/>
            <person name="Zhou S."/>
            <person name="Schwartz D.C."/>
            <person name="Perna N.T."/>
            <person name="Mobley H.L.T."/>
            <person name="Donnenberg M.S."/>
            <person name="Blattner F.R."/>
        </authorList>
    </citation>
    <scope>NUCLEOTIDE SEQUENCE [LARGE SCALE GENOMIC DNA]</scope>
    <source>
        <strain>CFT073 / ATCC 700928 / UPEC</strain>
    </source>
</reference>